<comment type="function">
    <text evidence="1">Located on the platform of the 30S subunit, it bridges several disparate RNA helices of the 16S rRNA. Forms part of the Shine-Dalgarno cleft in the 70S ribosome.</text>
</comment>
<comment type="subunit">
    <text evidence="1">Part of the 30S ribosomal subunit. Interacts with proteins S7 and S18. Binds to IF-3.</text>
</comment>
<comment type="similarity">
    <text evidence="1">Belongs to the universal ribosomal protein uS11 family.</text>
</comment>
<name>RS11_PSEPF</name>
<sequence length="129" mass="13616">MAKPAARPRKKVKKTVVDGIAHIHASFNNTIVTITDRQGNALSWATSGGSGFRGSRKSTPFAAQVAAERAGQAALEYGLKNLDVNVKGPGPGRESAVRALNGCGYKIASITDVTPIPHNGCRPPKKRRV</sequence>
<proteinExistence type="inferred from homology"/>
<protein>
    <recommendedName>
        <fullName evidence="1">Small ribosomal subunit protein uS11</fullName>
    </recommendedName>
    <alternativeName>
        <fullName evidence="2">30S ribosomal protein S11</fullName>
    </alternativeName>
</protein>
<reference key="1">
    <citation type="journal article" date="2009" name="Genome Biol.">
        <title>Genomic and genetic analyses of diversity and plant interactions of Pseudomonas fluorescens.</title>
        <authorList>
            <person name="Silby M.W."/>
            <person name="Cerdeno-Tarraga A.M."/>
            <person name="Vernikos G.S."/>
            <person name="Giddens S.R."/>
            <person name="Jackson R.W."/>
            <person name="Preston G.M."/>
            <person name="Zhang X.-X."/>
            <person name="Moon C.D."/>
            <person name="Gehrig S.M."/>
            <person name="Godfrey S.A.C."/>
            <person name="Knight C.G."/>
            <person name="Malone J.G."/>
            <person name="Robinson Z."/>
            <person name="Spiers A.J."/>
            <person name="Harris S."/>
            <person name="Challis G.L."/>
            <person name="Yaxley A.M."/>
            <person name="Harris D."/>
            <person name="Seeger K."/>
            <person name="Murphy L."/>
            <person name="Rutter S."/>
            <person name="Squares R."/>
            <person name="Quail M.A."/>
            <person name="Saunders E."/>
            <person name="Mavromatis K."/>
            <person name="Brettin T.S."/>
            <person name="Bentley S.D."/>
            <person name="Hothersall J."/>
            <person name="Stephens E."/>
            <person name="Thomas C.M."/>
            <person name="Parkhill J."/>
            <person name="Levy S.B."/>
            <person name="Rainey P.B."/>
            <person name="Thomson N.R."/>
        </authorList>
    </citation>
    <scope>NUCLEOTIDE SEQUENCE [LARGE SCALE GENOMIC DNA]</scope>
    <source>
        <strain>Pf0-1</strain>
    </source>
</reference>
<gene>
    <name evidence="1" type="primary">rpsK</name>
    <name type="ordered locus">Pfl01_5057</name>
</gene>
<evidence type="ECO:0000255" key="1">
    <source>
        <dbReference type="HAMAP-Rule" id="MF_01310"/>
    </source>
</evidence>
<evidence type="ECO:0000305" key="2"/>
<dbReference type="EMBL" id="CP000094">
    <property type="protein sequence ID" value="ABA76794.1"/>
    <property type="molecule type" value="Genomic_DNA"/>
</dbReference>
<dbReference type="RefSeq" id="WP_002555466.1">
    <property type="nucleotide sequence ID" value="NC_007492.2"/>
</dbReference>
<dbReference type="SMR" id="Q3K610"/>
<dbReference type="GeneID" id="98285415"/>
<dbReference type="KEGG" id="pfo:Pfl01_5057"/>
<dbReference type="eggNOG" id="COG0100">
    <property type="taxonomic scope" value="Bacteria"/>
</dbReference>
<dbReference type="HOGENOM" id="CLU_072439_5_0_6"/>
<dbReference type="Proteomes" id="UP000002704">
    <property type="component" value="Chromosome"/>
</dbReference>
<dbReference type="GO" id="GO:1990904">
    <property type="term" value="C:ribonucleoprotein complex"/>
    <property type="evidence" value="ECO:0007669"/>
    <property type="project" value="UniProtKB-KW"/>
</dbReference>
<dbReference type="GO" id="GO:0005840">
    <property type="term" value="C:ribosome"/>
    <property type="evidence" value="ECO:0007669"/>
    <property type="project" value="UniProtKB-KW"/>
</dbReference>
<dbReference type="GO" id="GO:0019843">
    <property type="term" value="F:rRNA binding"/>
    <property type="evidence" value="ECO:0007669"/>
    <property type="project" value="UniProtKB-UniRule"/>
</dbReference>
<dbReference type="GO" id="GO:0003735">
    <property type="term" value="F:structural constituent of ribosome"/>
    <property type="evidence" value="ECO:0007669"/>
    <property type="project" value="InterPro"/>
</dbReference>
<dbReference type="GO" id="GO:0006412">
    <property type="term" value="P:translation"/>
    <property type="evidence" value="ECO:0007669"/>
    <property type="project" value="UniProtKB-UniRule"/>
</dbReference>
<dbReference type="FunFam" id="3.30.420.80:FF:000001">
    <property type="entry name" value="30S ribosomal protein S11"/>
    <property type="match status" value="1"/>
</dbReference>
<dbReference type="Gene3D" id="3.30.420.80">
    <property type="entry name" value="Ribosomal protein S11"/>
    <property type="match status" value="1"/>
</dbReference>
<dbReference type="HAMAP" id="MF_01310">
    <property type="entry name" value="Ribosomal_uS11"/>
    <property type="match status" value="1"/>
</dbReference>
<dbReference type="InterPro" id="IPR001971">
    <property type="entry name" value="Ribosomal_uS11"/>
</dbReference>
<dbReference type="InterPro" id="IPR019981">
    <property type="entry name" value="Ribosomal_uS11_bac-type"/>
</dbReference>
<dbReference type="InterPro" id="IPR018102">
    <property type="entry name" value="Ribosomal_uS11_CS"/>
</dbReference>
<dbReference type="InterPro" id="IPR036967">
    <property type="entry name" value="Ribosomal_uS11_sf"/>
</dbReference>
<dbReference type="NCBIfam" id="NF003698">
    <property type="entry name" value="PRK05309.1"/>
    <property type="match status" value="1"/>
</dbReference>
<dbReference type="NCBIfam" id="TIGR03632">
    <property type="entry name" value="uS11_bact"/>
    <property type="match status" value="1"/>
</dbReference>
<dbReference type="PANTHER" id="PTHR11759">
    <property type="entry name" value="40S RIBOSOMAL PROTEIN S14/30S RIBOSOMAL PROTEIN S11"/>
    <property type="match status" value="1"/>
</dbReference>
<dbReference type="Pfam" id="PF00411">
    <property type="entry name" value="Ribosomal_S11"/>
    <property type="match status" value="1"/>
</dbReference>
<dbReference type="PIRSF" id="PIRSF002131">
    <property type="entry name" value="Ribosomal_S11"/>
    <property type="match status" value="1"/>
</dbReference>
<dbReference type="SUPFAM" id="SSF53137">
    <property type="entry name" value="Translational machinery components"/>
    <property type="match status" value="1"/>
</dbReference>
<dbReference type="PROSITE" id="PS00054">
    <property type="entry name" value="RIBOSOMAL_S11"/>
    <property type="match status" value="1"/>
</dbReference>
<feature type="chain" id="PRO_0000230420" description="Small ribosomal subunit protein uS11">
    <location>
        <begin position="1"/>
        <end position="129"/>
    </location>
</feature>
<accession>Q3K610</accession>
<keyword id="KW-0687">Ribonucleoprotein</keyword>
<keyword id="KW-0689">Ribosomal protein</keyword>
<keyword id="KW-0694">RNA-binding</keyword>
<keyword id="KW-0699">rRNA-binding</keyword>
<organism>
    <name type="scientific">Pseudomonas fluorescens (strain Pf0-1)</name>
    <dbReference type="NCBI Taxonomy" id="205922"/>
    <lineage>
        <taxon>Bacteria</taxon>
        <taxon>Pseudomonadati</taxon>
        <taxon>Pseudomonadota</taxon>
        <taxon>Gammaproteobacteria</taxon>
        <taxon>Pseudomonadales</taxon>
        <taxon>Pseudomonadaceae</taxon>
        <taxon>Pseudomonas</taxon>
    </lineage>
</organism>